<accession>Q5HK14</accession>
<reference key="1">
    <citation type="journal article" date="2005" name="J. Bacteriol.">
        <title>Insights on evolution of virulence and resistance from the complete genome analysis of an early methicillin-resistant Staphylococcus aureus strain and a biofilm-producing methicillin-resistant Staphylococcus epidermidis strain.</title>
        <authorList>
            <person name="Gill S.R."/>
            <person name="Fouts D.E."/>
            <person name="Archer G.L."/>
            <person name="Mongodin E.F."/>
            <person name="DeBoy R.T."/>
            <person name="Ravel J."/>
            <person name="Paulsen I.T."/>
            <person name="Kolonay J.F."/>
            <person name="Brinkac L.M."/>
            <person name="Beanan M.J."/>
            <person name="Dodson R.J."/>
            <person name="Daugherty S.C."/>
            <person name="Madupu R."/>
            <person name="Angiuoli S.V."/>
            <person name="Durkin A.S."/>
            <person name="Haft D.H."/>
            <person name="Vamathevan J.J."/>
            <person name="Khouri H."/>
            <person name="Utterback T.R."/>
            <person name="Lee C."/>
            <person name="Dimitrov G."/>
            <person name="Jiang L."/>
            <person name="Qin H."/>
            <person name="Weidman J."/>
            <person name="Tran K."/>
            <person name="Kang K.H."/>
            <person name="Hance I.R."/>
            <person name="Nelson K.E."/>
            <person name="Fraser C.M."/>
        </authorList>
    </citation>
    <scope>NUCLEOTIDE SEQUENCE [LARGE SCALE GENOMIC DNA]</scope>
    <source>
        <strain>ATCC 35984 / DSM 28319 / BCRC 17069 / CCUG 31568 / BM 3577 / RP62A</strain>
    </source>
</reference>
<keyword id="KW-1185">Reference proteome</keyword>
<keyword id="KW-0687">Ribonucleoprotein</keyword>
<keyword id="KW-0689">Ribosomal protein</keyword>
<keyword id="KW-0694">RNA-binding</keyword>
<keyword id="KW-0699">rRNA-binding</keyword>
<comment type="function">
    <text evidence="1">Binds to the 23S rRNA.</text>
</comment>
<comment type="similarity">
    <text evidence="1">Belongs to the bacterial ribosomal protein bL9 family.</text>
</comment>
<evidence type="ECO:0000255" key="1">
    <source>
        <dbReference type="HAMAP-Rule" id="MF_00503"/>
    </source>
</evidence>
<evidence type="ECO:0000305" key="2"/>
<sequence>MKVIFTQDVKGKGKKGEVKDVPVGYANNFLLKNKYAVEATPGNLKQLEQQNKRAEADRQQEIDDAKALKEQLKDIEVEVSAKTGEGGKLFGSISTKQIAEALKKQHDIKIDKRKMDLPHGIHALGYTNVPVKLDKEVEGTIRVHTVEQ</sequence>
<name>RL9_STAEQ</name>
<feature type="chain" id="PRO_0000176682" description="Large ribosomal subunit protein bL9">
    <location>
        <begin position="1"/>
        <end position="148"/>
    </location>
</feature>
<protein>
    <recommendedName>
        <fullName evidence="1">Large ribosomal subunit protein bL9</fullName>
    </recommendedName>
    <alternativeName>
        <fullName evidence="2">50S ribosomal protein L9</fullName>
    </alternativeName>
</protein>
<proteinExistence type="inferred from homology"/>
<gene>
    <name evidence="1" type="primary">rplI</name>
    <name type="ordered locus">SERP2538</name>
</gene>
<dbReference type="EMBL" id="CP000029">
    <property type="protein sequence ID" value="AAW53353.1"/>
    <property type="molecule type" value="Genomic_DNA"/>
</dbReference>
<dbReference type="RefSeq" id="WP_001831811.1">
    <property type="nucleotide sequence ID" value="NC_002976.3"/>
</dbReference>
<dbReference type="SMR" id="Q5HK14"/>
<dbReference type="STRING" id="176279.SERP2538"/>
<dbReference type="GeneID" id="50017429"/>
<dbReference type="KEGG" id="ser:SERP2538"/>
<dbReference type="eggNOG" id="COG0359">
    <property type="taxonomic scope" value="Bacteria"/>
</dbReference>
<dbReference type="HOGENOM" id="CLU_078938_3_2_9"/>
<dbReference type="Proteomes" id="UP000000531">
    <property type="component" value="Chromosome"/>
</dbReference>
<dbReference type="GO" id="GO:1990904">
    <property type="term" value="C:ribonucleoprotein complex"/>
    <property type="evidence" value="ECO:0007669"/>
    <property type="project" value="UniProtKB-KW"/>
</dbReference>
<dbReference type="GO" id="GO:0005840">
    <property type="term" value="C:ribosome"/>
    <property type="evidence" value="ECO:0007669"/>
    <property type="project" value="UniProtKB-KW"/>
</dbReference>
<dbReference type="GO" id="GO:0019843">
    <property type="term" value="F:rRNA binding"/>
    <property type="evidence" value="ECO:0007669"/>
    <property type="project" value="UniProtKB-UniRule"/>
</dbReference>
<dbReference type="GO" id="GO:0003735">
    <property type="term" value="F:structural constituent of ribosome"/>
    <property type="evidence" value="ECO:0007669"/>
    <property type="project" value="InterPro"/>
</dbReference>
<dbReference type="GO" id="GO:0006412">
    <property type="term" value="P:translation"/>
    <property type="evidence" value="ECO:0007669"/>
    <property type="project" value="UniProtKB-UniRule"/>
</dbReference>
<dbReference type="FunFam" id="3.10.430.100:FF:000002">
    <property type="entry name" value="50S ribosomal protein L9"/>
    <property type="match status" value="1"/>
</dbReference>
<dbReference type="FunFam" id="3.40.5.10:FF:000002">
    <property type="entry name" value="50S ribosomal protein L9"/>
    <property type="match status" value="1"/>
</dbReference>
<dbReference type="Gene3D" id="3.10.430.100">
    <property type="entry name" value="Ribosomal protein L9, C-terminal domain"/>
    <property type="match status" value="1"/>
</dbReference>
<dbReference type="Gene3D" id="3.40.5.10">
    <property type="entry name" value="Ribosomal protein L9, N-terminal domain"/>
    <property type="match status" value="1"/>
</dbReference>
<dbReference type="HAMAP" id="MF_00503">
    <property type="entry name" value="Ribosomal_bL9"/>
    <property type="match status" value="1"/>
</dbReference>
<dbReference type="InterPro" id="IPR000244">
    <property type="entry name" value="Ribosomal_bL9"/>
</dbReference>
<dbReference type="InterPro" id="IPR009027">
    <property type="entry name" value="Ribosomal_bL9/RNase_H1_N"/>
</dbReference>
<dbReference type="InterPro" id="IPR020594">
    <property type="entry name" value="Ribosomal_bL9_bac/chp"/>
</dbReference>
<dbReference type="InterPro" id="IPR020069">
    <property type="entry name" value="Ribosomal_bL9_C"/>
</dbReference>
<dbReference type="InterPro" id="IPR036791">
    <property type="entry name" value="Ribosomal_bL9_C_sf"/>
</dbReference>
<dbReference type="InterPro" id="IPR020070">
    <property type="entry name" value="Ribosomal_bL9_N"/>
</dbReference>
<dbReference type="InterPro" id="IPR036935">
    <property type="entry name" value="Ribosomal_bL9_N_sf"/>
</dbReference>
<dbReference type="NCBIfam" id="TIGR00158">
    <property type="entry name" value="L9"/>
    <property type="match status" value="1"/>
</dbReference>
<dbReference type="PANTHER" id="PTHR21368">
    <property type="entry name" value="50S RIBOSOMAL PROTEIN L9"/>
    <property type="match status" value="1"/>
</dbReference>
<dbReference type="Pfam" id="PF03948">
    <property type="entry name" value="Ribosomal_L9_C"/>
    <property type="match status" value="1"/>
</dbReference>
<dbReference type="Pfam" id="PF01281">
    <property type="entry name" value="Ribosomal_L9_N"/>
    <property type="match status" value="1"/>
</dbReference>
<dbReference type="SUPFAM" id="SSF55658">
    <property type="entry name" value="L9 N-domain-like"/>
    <property type="match status" value="1"/>
</dbReference>
<dbReference type="SUPFAM" id="SSF55653">
    <property type="entry name" value="Ribosomal protein L9 C-domain"/>
    <property type="match status" value="1"/>
</dbReference>
<dbReference type="PROSITE" id="PS00651">
    <property type="entry name" value="RIBOSOMAL_L9"/>
    <property type="match status" value="1"/>
</dbReference>
<organism>
    <name type="scientific">Staphylococcus epidermidis (strain ATCC 35984 / DSM 28319 / BCRC 17069 / CCUG 31568 / BM 3577 / RP62A)</name>
    <dbReference type="NCBI Taxonomy" id="176279"/>
    <lineage>
        <taxon>Bacteria</taxon>
        <taxon>Bacillati</taxon>
        <taxon>Bacillota</taxon>
        <taxon>Bacilli</taxon>
        <taxon>Bacillales</taxon>
        <taxon>Staphylococcaceae</taxon>
        <taxon>Staphylococcus</taxon>
    </lineage>
</organism>